<protein>
    <recommendedName>
        <fullName evidence="1">ATP synthase gamma chain</fullName>
    </recommendedName>
    <alternativeName>
        <fullName evidence="1">ATP synthase F1 sector gamma subunit</fullName>
    </alternativeName>
    <alternativeName>
        <fullName evidence="1">F-ATPase gamma subunit</fullName>
    </alternativeName>
</protein>
<proteinExistence type="inferred from homology"/>
<feature type="chain" id="PRO_1000053149" description="ATP synthase gamma chain">
    <location>
        <begin position="1"/>
        <end position="286"/>
    </location>
</feature>
<gene>
    <name evidence="1" type="primary">atpG</name>
    <name type="ordered locus">ABO_2727</name>
</gene>
<keyword id="KW-0066">ATP synthesis</keyword>
<keyword id="KW-0997">Cell inner membrane</keyword>
<keyword id="KW-1003">Cell membrane</keyword>
<keyword id="KW-0139">CF(1)</keyword>
<keyword id="KW-0375">Hydrogen ion transport</keyword>
<keyword id="KW-0406">Ion transport</keyword>
<keyword id="KW-0472">Membrane</keyword>
<keyword id="KW-1185">Reference proteome</keyword>
<keyword id="KW-0813">Transport</keyword>
<sequence length="286" mass="31469">MASGKEIKGKIASVQSTKKITRAMEMVAASKMRKAQERMTASKPYASRMRQVVAHLANADLEYRHVYLQEREVKNVGYIVVSSDRGLCGGLNVNLLKNVVKSAKAWEEKGAKTSYCVVGSKGMSFFKSVGGNVEANITGLGDTPHLNDLIGSIKVMLDAYESGAIDRLYIVYNEFVNTMTQSPKNIQLLPLEAGSDEELKRHWDYIYEPAPKELLDELLVRFIESQVYQGVVENNACEQAARMIAMKAASDNAGDIIRDLQLVYNKARQAAITQEISEIVGGAAAV</sequence>
<name>ATPG_ALCBS</name>
<comment type="function">
    <text evidence="1">Produces ATP from ADP in the presence of a proton gradient across the membrane. The gamma chain is believed to be important in regulating ATPase activity and the flow of protons through the CF(0) complex.</text>
</comment>
<comment type="subunit">
    <text evidence="1">F-type ATPases have 2 components, CF(1) - the catalytic core - and CF(0) - the membrane proton channel. CF(1) has five subunits: alpha(3), beta(3), gamma(1), delta(1), epsilon(1). CF(0) has three main subunits: a, b and c.</text>
</comment>
<comment type="subcellular location">
    <subcellularLocation>
        <location evidence="1">Cell inner membrane</location>
        <topology evidence="1">Peripheral membrane protein</topology>
    </subcellularLocation>
</comment>
<comment type="similarity">
    <text evidence="1">Belongs to the ATPase gamma chain family.</text>
</comment>
<accession>Q0VKX3</accession>
<dbReference type="EMBL" id="AM286690">
    <property type="protein sequence ID" value="CAL18175.1"/>
    <property type="molecule type" value="Genomic_DNA"/>
</dbReference>
<dbReference type="RefSeq" id="WP_011589998.1">
    <property type="nucleotide sequence ID" value="NC_008260.1"/>
</dbReference>
<dbReference type="SMR" id="Q0VKX3"/>
<dbReference type="STRING" id="393595.ABO_2727"/>
<dbReference type="KEGG" id="abo:ABO_2727"/>
<dbReference type="eggNOG" id="COG0224">
    <property type="taxonomic scope" value="Bacteria"/>
</dbReference>
<dbReference type="HOGENOM" id="CLU_050669_0_1_6"/>
<dbReference type="OrthoDB" id="9812769at2"/>
<dbReference type="Proteomes" id="UP000008871">
    <property type="component" value="Chromosome"/>
</dbReference>
<dbReference type="GO" id="GO:0005886">
    <property type="term" value="C:plasma membrane"/>
    <property type="evidence" value="ECO:0007669"/>
    <property type="project" value="UniProtKB-SubCell"/>
</dbReference>
<dbReference type="GO" id="GO:0045259">
    <property type="term" value="C:proton-transporting ATP synthase complex"/>
    <property type="evidence" value="ECO:0007669"/>
    <property type="project" value="UniProtKB-KW"/>
</dbReference>
<dbReference type="GO" id="GO:0005524">
    <property type="term" value="F:ATP binding"/>
    <property type="evidence" value="ECO:0007669"/>
    <property type="project" value="UniProtKB-UniRule"/>
</dbReference>
<dbReference type="GO" id="GO:0046933">
    <property type="term" value="F:proton-transporting ATP synthase activity, rotational mechanism"/>
    <property type="evidence" value="ECO:0007669"/>
    <property type="project" value="UniProtKB-UniRule"/>
</dbReference>
<dbReference type="GO" id="GO:0042777">
    <property type="term" value="P:proton motive force-driven plasma membrane ATP synthesis"/>
    <property type="evidence" value="ECO:0007669"/>
    <property type="project" value="UniProtKB-UniRule"/>
</dbReference>
<dbReference type="CDD" id="cd12151">
    <property type="entry name" value="F1-ATPase_gamma"/>
    <property type="match status" value="1"/>
</dbReference>
<dbReference type="FunFam" id="1.10.287.80:FF:000005">
    <property type="entry name" value="ATP synthase gamma chain"/>
    <property type="match status" value="1"/>
</dbReference>
<dbReference type="FunFam" id="3.40.1380.10:FF:000006">
    <property type="entry name" value="ATP synthase gamma chain"/>
    <property type="match status" value="1"/>
</dbReference>
<dbReference type="Gene3D" id="3.40.1380.10">
    <property type="match status" value="1"/>
</dbReference>
<dbReference type="Gene3D" id="1.10.287.80">
    <property type="entry name" value="ATP synthase, gamma subunit, helix hairpin domain"/>
    <property type="match status" value="2"/>
</dbReference>
<dbReference type="HAMAP" id="MF_00815">
    <property type="entry name" value="ATP_synth_gamma_bact"/>
    <property type="match status" value="1"/>
</dbReference>
<dbReference type="InterPro" id="IPR035968">
    <property type="entry name" value="ATP_synth_F1_ATPase_gsu"/>
</dbReference>
<dbReference type="InterPro" id="IPR000131">
    <property type="entry name" value="ATP_synth_F1_gsu"/>
</dbReference>
<dbReference type="InterPro" id="IPR023632">
    <property type="entry name" value="ATP_synth_F1_gsu_CS"/>
</dbReference>
<dbReference type="NCBIfam" id="TIGR01146">
    <property type="entry name" value="ATPsyn_F1gamma"/>
    <property type="match status" value="1"/>
</dbReference>
<dbReference type="NCBIfam" id="NF004144">
    <property type="entry name" value="PRK05621.1-1"/>
    <property type="match status" value="1"/>
</dbReference>
<dbReference type="PANTHER" id="PTHR11693">
    <property type="entry name" value="ATP SYNTHASE GAMMA CHAIN"/>
    <property type="match status" value="1"/>
</dbReference>
<dbReference type="PANTHER" id="PTHR11693:SF22">
    <property type="entry name" value="ATP SYNTHASE SUBUNIT GAMMA, MITOCHONDRIAL"/>
    <property type="match status" value="1"/>
</dbReference>
<dbReference type="Pfam" id="PF00231">
    <property type="entry name" value="ATP-synt"/>
    <property type="match status" value="1"/>
</dbReference>
<dbReference type="PRINTS" id="PR00126">
    <property type="entry name" value="ATPASEGAMMA"/>
</dbReference>
<dbReference type="SUPFAM" id="SSF52943">
    <property type="entry name" value="ATP synthase (F1-ATPase), gamma subunit"/>
    <property type="match status" value="1"/>
</dbReference>
<dbReference type="PROSITE" id="PS00153">
    <property type="entry name" value="ATPASE_GAMMA"/>
    <property type="match status" value="1"/>
</dbReference>
<reference key="1">
    <citation type="journal article" date="2006" name="Nat. Biotechnol.">
        <title>Genome sequence of the ubiquitous hydrocarbon-degrading marine bacterium Alcanivorax borkumensis.</title>
        <authorList>
            <person name="Schneiker S."/>
            <person name="Martins dos Santos V.A.P."/>
            <person name="Bartels D."/>
            <person name="Bekel T."/>
            <person name="Brecht M."/>
            <person name="Buhrmester J."/>
            <person name="Chernikova T.N."/>
            <person name="Denaro R."/>
            <person name="Ferrer M."/>
            <person name="Gertler C."/>
            <person name="Goesmann A."/>
            <person name="Golyshina O.V."/>
            <person name="Kaminski F."/>
            <person name="Khachane A.N."/>
            <person name="Lang S."/>
            <person name="Linke B."/>
            <person name="McHardy A.C."/>
            <person name="Meyer F."/>
            <person name="Nechitaylo T."/>
            <person name="Puehler A."/>
            <person name="Regenhardt D."/>
            <person name="Rupp O."/>
            <person name="Sabirova J.S."/>
            <person name="Selbitschka W."/>
            <person name="Yakimov M.M."/>
            <person name="Timmis K.N."/>
            <person name="Vorhoelter F.-J."/>
            <person name="Weidner S."/>
            <person name="Kaiser O."/>
            <person name="Golyshin P.N."/>
        </authorList>
    </citation>
    <scope>NUCLEOTIDE SEQUENCE [LARGE SCALE GENOMIC DNA]</scope>
    <source>
        <strain>ATCC 700651 / DSM 11573 / NCIMB 13689 / SK2</strain>
    </source>
</reference>
<organism>
    <name type="scientific">Alcanivorax borkumensis (strain ATCC 700651 / DSM 11573 / NCIMB 13689 / SK2)</name>
    <dbReference type="NCBI Taxonomy" id="393595"/>
    <lineage>
        <taxon>Bacteria</taxon>
        <taxon>Pseudomonadati</taxon>
        <taxon>Pseudomonadota</taxon>
        <taxon>Gammaproteobacteria</taxon>
        <taxon>Oceanospirillales</taxon>
        <taxon>Alcanivoracaceae</taxon>
        <taxon>Alcanivorax</taxon>
    </lineage>
</organism>
<evidence type="ECO:0000255" key="1">
    <source>
        <dbReference type="HAMAP-Rule" id="MF_00815"/>
    </source>
</evidence>